<dbReference type="EC" id="2.3.1.129" evidence="1"/>
<dbReference type="EMBL" id="BX936398">
    <property type="protein sequence ID" value="CAH22229.1"/>
    <property type="molecule type" value="Genomic_DNA"/>
</dbReference>
<dbReference type="RefSeq" id="WP_002212143.1">
    <property type="nucleotide sequence ID" value="NZ_CP009712.1"/>
</dbReference>
<dbReference type="SMR" id="Q667K1"/>
<dbReference type="GeneID" id="57977505"/>
<dbReference type="KEGG" id="ypo:BZ17_3630"/>
<dbReference type="KEGG" id="yps:YPTB2991"/>
<dbReference type="PATRIC" id="fig|273123.14.peg.3811"/>
<dbReference type="UniPathway" id="UPA00359">
    <property type="reaction ID" value="UER00477"/>
</dbReference>
<dbReference type="Proteomes" id="UP000001011">
    <property type="component" value="Chromosome"/>
</dbReference>
<dbReference type="GO" id="GO:0005737">
    <property type="term" value="C:cytoplasm"/>
    <property type="evidence" value="ECO:0007669"/>
    <property type="project" value="UniProtKB-SubCell"/>
</dbReference>
<dbReference type="GO" id="GO:0016020">
    <property type="term" value="C:membrane"/>
    <property type="evidence" value="ECO:0007669"/>
    <property type="project" value="GOC"/>
</dbReference>
<dbReference type="GO" id="GO:0008780">
    <property type="term" value="F:acyl-[acyl-carrier-protein]-UDP-N-acetylglucosamine O-acyltransferase activity"/>
    <property type="evidence" value="ECO:0007669"/>
    <property type="project" value="UniProtKB-UniRule"/>
</dbReference>
<dbReference type="GO" id="GO:0009245">
    <property type="term" value="P:lipid A biosynthetic process"/>
    <property type="evidence" value="ECO:0007669"/>
    <property type="project" value="UniProtKB-UniRule"/>
</dbReference>
<dbReference type="CDD" id="cd03351">
    <property type="entry name" value="LbH_UDP-GlcNAc_AT"/>
    <property type="match status" value="1"/>
</dbReference>
<dbReference type="FunFam" id="1.20.1180.10:FF:000001">
    <property type="entry name" value="Acyl-[acyl-carrier-protein]--UDP-N-acetylglucosamine O-acyltransferase"/>
    <property type="match status" value="1"/>
</dbReference>
<dbReference type="FunFam" id="2.160.10.10:FF:000003">
    <property type="entry name" value="Acyl-[acyl-carrier-protein]--UDP-N-acetylglucosamine O-acyltransferase"/>
    <property type="match status" value="1"/>
</dbReference>
<dbReference type="Gene3D" id="2.160.10.10">
    <property type="entry name" value="Hexapeptide repeat proteins"/>
    <property type="match status" value="1"/>
</dbReference>
<dbReference type="Gene3D" id="1.20.1180.10">
    <property type="entry name" value="Udp N-acetylglucosamine O-acyltransferase, C-terminal domain"/>
    <property type="match status" value="1"/>
</dbReference>
<dbReference type="HAMAP" id="MF_00387">
    <property type="entry name" value="LpxA"/>
    <property type="match status" value="1"/>
</dbReference>
<dbReference type="InterPro" id="IPR029098">
    <property type="entry name" value="Acetyltransf_C"/>
</dbReference>
<dbReference type="InterPro" id="IPR037157">
    <property type="entry name" value="Acetyltransf_C_sf"/>
</dbReference>
<dbReference type="InterPro" id="IPR001451">
    <property type="entry name" value="Hexapep"/>
</dbReference>
<dbReference type="InterPro" id="IPR018357">
    <property type="entry name" value="Hexapep_transf_CS"/>
</dbReference>
<dbReference type="InterPro" id="IPR010137">
    <property type="entry name" value="Lipid_A_LpxA"/>
</dbReference>
<dbReference type="InterPro" id="IPR011004">
    <property type="entry name" value="Trimer_LpxA-like_sf"/>
</dbReference>
<dbReference type="NCBIfam" id="TIGR01852">
    <property type="entry name" value="lipid_A_lpxA"/>
    <property type="match status" value="1"/>
</dbReference>
<dbReference type="NCBIfam" id="NF003657">
    <property type="entry name" value="PRK05289.1"/>
    <property type="match status" value="1"/>
</dbReference>
<dbReference type="PANTHER" id="PTHR43480">
    <property type="entry name" value="ACYL-[ACYL-CARRIER-PROTEIN]--UDP-N-ACETYLGLUCOSAMINE O-ACYLTRANSFERASE"/>
    <property type="match status" value="1"/>
</dbReference>
<dbReference type="PANTHER" id="PTHR43480:SF1">
    <property type="entry name" value="ACYL-[ACYL-CARRIER-PROTEIN]--UDP-N-ACETYLGLUCOSAMINE O-ACYLTRANSFERASE, MITOCHONDRIAL-RELATED"/>
    <property type="match status" value="1"/>
</dbReference>
<dbReference type="Pfam" id="PF13720">
    <property type="entry name" value="Acetyltransf_11"/>
    <property type="match status" value="1"/>
</dbReference>
<dbReference type="Pfam" id="PF00132">
    <property type="entry name" value="Hexapep"/>
    <property type="match status" value="2"/>
</dbReference>
<dbReference type="PIRSF" id="PIRSF000456">
    <property type="entry name" value="UDP-GlcNAc_acltr"/>
    <property type="match status" value="1"/>
</dbReference>
<dbReference type="SUPFAM" id="SSF51161">
    <property type="entry name" value="Trimeric LpxA-like enzymes"/>
    <property type="match status" value="1"/>
</dbReference>
<dbReference type="PROSITE" id="PS00101">
    <property type="entry name" value="HEXAPEP_TRANSFERASES"/>
    <property type="match status" value="2"/>
</dbReference>
<accession>Q667K1</accession>
<name>LPXA_YERPS</name>
<proteinExistence type="inferred from homology"/>
<feature type="chain" id="PRO_0000302617" description="Acyl-[acyl-carrier-protein]--UDP-N-acetylglucosamine O-acyltransferase">
    <location>
        <begin position="1"/>
        <end position="262"/>
    </location>
</feature>
<sequence length="262" mass="28117">MIDKTAFIHPSSIVEEGAIIGAGVYIGPFCIVGSQVEIGAGTELKSHVVVNGITKIGCDNQIYQFASIGEANQDLKYAGEPTRVEVGDRNRIRESVTIHRGTTQGGGVTKVGCDNLLMVNTHVAHDCVIGNRCILANNAALGGHVEIDDYAIIGGMTAIHQFCVIGAHVMVGGCSGITQDVPPFVIAQGNHATPFGINIEGLKRRGFDKESLHAIRSAYKLLYRSGRTLDEVKPEIAELAEQYPVVKAFNDFFARSTRGIIR</sequence>
<gene>
    <name evidence="1" type="primary">lpxA</name>
    <name type="ordered locus">YPTB2991</name>
</gene>
<comment type="function">
    <text evidence="1">Involved in the biosynthesis of lipid A, a phosphorylated glycolipid that anchors the lipopolysaccharide to the outer membrane of the cell.</text>
</comment>
<comment type="catalytic activity">
    <reaction evidence="1">
        <text>a (3R)-hydroxyacyl-[ACP] + UDP-N-acetyl-alpha-D-glucosamine = a UDP-3-O-[(3R)-3-hydroxyacyl]-N-acetyl-alpha-D-glucosamine + holo-[ACP]</text>
        <dbReference type="Rhea" id="RHEA:67812"/>
        <dbReference type="Rhea" id="RHEA-COMP:9685"/>
        <dbReference type="Rhea" id="RHEA-COMP:9945"/>
        <dbReference type="ChEBI" id="CHEBI:57705"/>
        <dbReference type="ChEBI" id="CHEBI:64479"/>
        <dbReference type="ChEBI" id="CHEBI:78827"/>
        <dbReference type="ChEBI" id="CHEBI:173225"/>
        <dbReference type="EC" id="2.3.1.129"/>
    </reaction>
</comment>
<comment type="pathway">
    <text evidence="1">Glycolipid biosynthesis; lipid IV(A) biosynthesis; lipid IV(A) from (3R)-3-hydroxytetradecanoyl-[acyl-carrier-protein] and UDP-N-acetyl-alpha-D-glucosamine: step 1/6.</text>
</comment>
<comment type="subunit">
    <text evidence="1">Homotrimer.</text>
</comment>
<comment type="subcellular location">
    <subcellularLocation>
        <location evidence="1">Cytoplasm</location>
    </subcellularLocation>
</comment>
<comment type="similarity">
    <text evidence="1">Belongs to the transferase hexapeptide repeat family. LpxA subfamily.</text>
</comment>
<reference key="1">
    <citation type="journal article" date="2004" name="Proc. Natl. Acad. Sci. U.S.A.">
        <title>Insights into the evolution of Yersinia pestis through whole-genome comparison with Yersinia pseudotuberculosis.</title>
        <authorList>
            <person name="Chain P.S.G."/>
            <person name="Carniel E."/>
            <person name="Larimer F.W."/>
            <person name="Lamerdin J."/>
            <person name="Stoutland P.O."/>
            <person name="Regala W.M."/>
            <person name="Georgescu A.M."/>
            <person name="Vergez L.M."/>
            <person name="Land M.L."/>
            <person name="Motin V.L."/>
            <person name="Brubaker R.R."/>
            <person name="Fowler J."/>
            <person name="Hinnebusch J."/>
            <person name="Marceau M."/>
            <person name="Medigue C."/>
            <person name="Simonet M."/>
            <person name="Chenal-Francisque V."/>
            <person name="Souza B."/>
            <person name="Dacheux D."/>
            <person name="Elliott J.M."/>
            <person name="Derbise A."/>
            <person name="Hauser L.J."/>
            <person name="Garcia E."/>
        </authorList>
    </citation>
    <scope>NUCLEOTIDE SEQUENCE [LARGE SCALE GENOMIC DNA]</scope>
    <source>
        <strain>IP32953</strain>
    </source>
</reference>
<organism>
    <name type="scientific">Yersinia pseudotuberculosis serotype I (strain IP32953)</name>
    <dbReference type="NCBI Taxonomy" id="273123"/>
    <lineage>
        <taxon>Bacteria</taxon>
        <taxon>Pseudomonadati</taxon>
        <taxon>Pseudomonadota</taxon>
        <taxon>Gammaproteobacteria</taxon>
        <taxon>Enterobacterales</taxon>
        <taxon>Yersiniaceae</taxon>
        <taxon>Yersinia</taxon>
    </lineage>
</organism>
<keyword id="KW-0012">Acyltransferase</keyword>
<keyword id="KW-0963">Cytoplasm</keyword>
<keyword id="KW-0441">Lipid A biosynthesis</keyword>
<keyword id="KW-0444">Lipid biosynthesis</keyword>
<keyword id="KW-0443">Lipid metabolism</keyword>
<keyword id="KW-0677">Repeat</keyword>
<keyword id="KW-0808">Transferase</keyword>
<protein>
    <recommendedName>
        <fullName evidence="1">Acyl-[acyl-carrier-protein]--UDP-N-acetylglucosamine O-acyltransferase</fullName>
        <shortName evidence="1">UDP-N-acetylglucosamine acyltransferase</shortName>
        <ecNumber evidence="1">2.3.1.129</ecNumber>
    </recommendedName>
</protein>
<evidence type="ECO:0000255" key="1">
    <source>
        <dbReference type="HAMAP-Rule" id="MF_00387"/>
    </source>
</evidence>